<dbReference type="EC" id="1.1.1.414" evidence="3"/>
<dbReference type="EMBL" id="U14003">
    <property type="protein sequence ID" value="AAA97256.1"/>
    <property type="status" value="ALT_INIT"/>
    <property type="molecule type" value="Genomic_DNA"/>
</dbReference>
<dbReference type="EMBL" id="U00096">
    <property type="protein sequence ID" value="AAC77314.4"/>
    <property type="molecule type" value="Genomic_DNA"/>
</dbReference>
<dbReference type="EMBL" id="AP009048">
    <property type="protein sequence ID" value="BAE78348.1"/>
    <property type="molecule type" value="Genomic_DNA"/>
</dbReference>
<dbReference type="PIR" id="S56585">
    <property type="entry name" value="S56585"/>
</dbReference>
<dbReference type="RefSeq" id="NP_418778.4">
    <property type="nucleotide sequence ID" value="NC_000913.3"/>
</dbReference>
<dbReference type="RefSeq" id="WP_000106030.1">
    <property type="nucleotide sequence ID" value="NZ_STEB01000025.1"/>
</dbReference>
<dbReference type="SMR" id="P39400"/>
<dbReference type="BioGRID" id="4261389">
    <property type="interactions" value="29"/>
</dbReference>
<dbReference type="FunCoup" id="P39400">
    <property type="interactions" value="123"/>
</dbReference>
<dbReference type="STRING" id="511145.b4358"/>
<dbReference type="PaxDb" id="511145-b4358"/>
<dbReference type="EnsemblBacteria" id="AAC77314">
    <property type="protein sequence ID" value="AAC77314"/>
    <property type="gene ID" value="b4358"/>
</dbReference>
<dbReference type="GeneID" id="93777490"/>
<dbReference type="GeneID" id="948883"/>
<dbReference type="KEGG" id="ecj:JW5793"/>
<dbReference type="KEGG" id="eco:b4358"/>
<dbReference type="KEGG" id="ecoc:C3026_23545"/>
<dbReference type="PATRIC" id="fig|1411691.4.peg.2328"/>
<dbReference type="EchoBASE" id="EB2475"/>
<dbReference type="eggNOG" id="COG1063">
    <property type="taxonomic scope" value="Bacteria"/>
</dbReference>
<dbReference type="HOGENOM" id="CLU_026673_11_0_6"/>
<dbReference type="InParanoid" id="P39400"/>
<dbReference type="OMA" id="THCENRT"/>
<dbReference type="OrthoDB" id="9773078at2"/>
<dbReference type="PhylomeDB" id="P39400"/>
<dbReference type="BioCyc" id="EcoCyc:G7945-MONOMER"/>
<dbReference type="BioCyc" id="MetaCyc:G7945-MONOMER"/>
<dbReference type="PRO" id="PR:P39400"/>
<dbReference type="Proteomes" id="UP000000625">
    <property type="component" value="Chromosome"/>
</dbReference>
<dbReference type="GO" id="GO:0016616">
    <property type="term" value="F:oxidoreductase activity, acting on the CH-OH group of donors, NAD or NADP as acceptor"/>
    <property type="evidence" value="ECO:0000314"/>
    <property type="project" value="EcoCyc"/>
</dbReference>
<dbReference type="GO" id="GO:0008270">
    <property type="term" value="F:zinc ion binding"/>
    <property type="evidence" value="ECO:0007669"/>
    <property type="project" value="InterPro"/>
</dbReference>
<dbReference type="GO" id="GO:0034195">
    <property type="term" value="P:L-galactonate catabolic process"/>
    <property type="evidence" value="ECO:0000315"/>
    <property type="project" value="EcoCyc"/>
</dbReference>
<dbReference type="CDD" id="cd08261">
    <property type="entry name" value="Zn_ADH7"/>
    <property type="match status" value="1"/>
</dbReference>
<dbReference type="FunFam" id="3.40.50.720:FF:000379">
    <property type="entry name" value="Oxidoreductase, zinc-binding dehydrogenase family"/>
    <property type="match status" value="1"/>
</dbReference>
<dbReference type="Gene3D" id="3.90.180.10">
    <property type="entry name" value="Medium-chain alcohol dehydrogenases, catalytic domain"/>
    <property type="match status" value="1"/>
</dbReference>
<dbReference type="Gene3D" id="3.40.50.720">
    <property type="entry name" value="NAD(P)-binding Rossmann-like Domain"/>
    <property type="match status" value="1"/>
</dbReference>
<dbReference type="InterPro" id="IPR013149">
    <property type="entry name" value="ADH-like_C"/>
</dbReference>
<dbReference type="InterPro" id="IPR013154">
    <property type="entry name" value="ADH-like_N"/>
</dbReference>
<dbReference type="InterPro" id="IPR002328">
    <property type="entry name" value="ADH_Zn_CS"/>
</dbReference>
<dbReference type="InterPro" id="IPR011032">
    <property type="entry name" value="GroES-like_sf"/>
</dbReference>
<dbReference type="InterPro" id="IPR036291">
    <property type="entry name" value="NAD(P)-bd_dom_sf"/>
</dbReference>
<dbReference type="InterPro" id="IPR020843">
    <property type="entry name" value="PKS_ER"/>
</dbReference>
<dbReference type="InterPro" id="IPR050129">
    <property type="entry name" value="Zn_alcohol_dh"/>
</dbReference>
<dbReference type="PANTHER" id="PTHR43401:SF3">
    <property type="entry name" value="L-GALACTONATE-5-DEHYDROGENASE"/>
    <property type="match status" value="1"/>
</dbReference>
<dbReference type="PANTHER" id="PTHR43401">
    <property type="entry name" value="L-THREONINE 3-DEHYDROGENASE"/>
    <property type="match status" value="1"/>
</dbReference>
<dbReference type="Pfam" id="PF08240">
    <property type="entry name" value="ADH_N"/>
    <property type="match status" value="1"/>
</dbReference>
<dbReference type="Pfam" id="PF00107">
    <property type="entry name" value="ADH_zinc_N"/>
    <property type="match status" value="1"/>
</dbReference>
<dbReference type="SMART" id="SM00829">
    <property type="entry name" value="PKS_ER"/>
    <property type="match status" value="1"/>
</dbReference>
<dbReference type="SUPFAM" id="SSF50129">
    <property type="entry name" value="GroES-like"/>
    <property type="match status" value="1"/>
</dbReference>
<dbReference type="SUPFAM" id="SSF51735">
    <property type="entry name" value="NAD(P)-binding Rossmann-fold domains"/>
    <property type="match status" value="1"/>
</dbReference>
<dbReference type="PROSITE" id="PS00059">
    <property type="entry name" value="ADH_ZINC"/>
    <property type="match status" value="1"/>
</dbReference>
<sequence>MSTMNVLICQQPKELVWKQREIPIPGDNEALIKIKSVGICGTDIHAWGGNQPFFSYPRVLGHEICGEIVGLGKNIADLKNGQQVAVIPYVACQQCPACKSGRTNCCEKISVIGVHQDGGFSEYLSVPVANILPADGIDPQAAALIEPFAISAHAVRRAAIAPGEQVLVVGAGPIGLGAAAIAKADGAQVVVADTSPARREHVATRLELPLLDPSAEDFDAQLRAQFGGSLAQKVIDATGNQHAMNNTVNLIRHGGTVVFVGLFKGELQFSDPEFHKKETTMMGSRNATPEDFAKVGRLMAEGKITADMMLTHRYPFATLAETYERDVINNRELIKGVITF</sequence>
<reference key="1">
    <citation type="journal article" date="1995" name="Nucleic Acids Res.">
        <title>Analysis of the Escherichia coli genome VI: DNA sequence of the region from 92.8 through 100 minutes.</title>
        <authorList>
            <person name="Burland V.D."/>
            <person name="Plunkett G. III"/>
            <person name="Sofia H.J."/>
            <person name="Daniels D.L."/>
            <person name="Blattner F.R."/>
        </authorList>
    </citation>
    <scope>NUCLEOTIDE SEQUENCE [LARGE SCALE GENOMIC DNA]</scope>
    <source>
        <strain>K12 / MG1655 / ATCC 47076</strain>
    </source>
</reference>
<reference key="2">
    <citation type="journal article" date="1997" name="Science">
        <title>The complete genome sequence of Escherichia coli K-12.</title>
        <authorList>
            <person name="Blattner F.R."/>
            <person name="Plunkett G. III"/>
            <person name="Bloch C.A."/>
            <person name="Perna N.T."/>
            <person name="Burland V."/>
            <person name="Riley M."/>
            <person name="Collado-Vides J."/>
            <person name="Glasner J.D."/>
            <person name="Rode C.K."/>
            <person name="Mayhew G.F."/>
            <person name="Gregor J."/>
            <person name="Davis N.W."/>
            <person name="Kirkpatrick H.A."/>
            <person name="Goeden M.A."/>
            <person name="Rose D.J."/>
            <person name="Mau B."/>
            <person name="Shao Y."/>
        </authorList>
    </citation>
    <scope>NUCLEOTIDE SEQUENCE [LARGE SCALE GENOMIC DNA]</scope>
    <source>
        <strain>K12 / MG1655 / ATCC 47076</strain>
    </source>
</reference>
<reference key="3">
    <citation type="journal article" date="2006" name="Mol. Syst. Biol.">
        <title>Highly accurate genome sequences of Escherichia coli K-12 strains MG1655 and W3110.</title>
        <authorList>
            <person name="Hayashi K."/>
            <person name="Morooka N."/>
            <person name="Yamamoto Y."/>
            <person name="Fujita K."/>
            <person name="Isono K."/>
            <person name="Choi S."/>
            <person name="Ohtsubo E."/>
            <person name="Baba T."/>
            <person name="Wanner B.L."/>
            <person name="Mori H."/>
            <person name="Horiuchi T."/>
        </authorList>
    </citation>
    <scope>NUCLEOTIDE SEQUENCE [LARGE SCALE GENOMIC DNA]</scope>
    <source>
        <strain>K12 / W3110 / ATCC 27325 / DSM 5911</strain>
    </source>
</reference>
<reference key="4">
    <citation type="journal article" date="2006" name="Proc. Natl. Acad. Sci. U.S.A.">
        <title>Systems approach to refining genome annotation.</title>
        <authorList>
            <person name="Reed J.L."/>
            <person name="Patel T.R."/>
            <person name="Chen K.H."/>
            <person name="Joyce A.R."/>
            <person name="Applebee M.K."/>
            <person name="Herring C.D."/>
            <person name="Bui O.T."/>
            <person name="Knight E.M."/>
            <person name="Fong S.S."/>
            <person name="Palsson B.O."/>
        </authorList>
    </citation>
    <scope>FUNCTION</scope>
    <scope>ROLE IN L-GALACTONATE UTILIZATION</scope>
    <scope>DISRUPTION PHENOTYPE</scope>
    <scope>INDUCTION</scope>
</reference>
<reference key="5">
    <citation type="journal article" date="2014" name="Appl. Biochem. Biotechnol.">
        <title>The yjjN of E. coli codes for an L-galactonate dehydrogenase and can be used for quantification of L-galactonate and L-gulonate.</title>
        <authorList>
            <person name="Kuivanen J."/>
            <person name="Richard P."/>
        </authorList>
    </citation>
    <scope>FUNCTION</scope>
    <scope>CATALYTIC ACTIVITY</scope>
    <scope>ACTIVITY REGULATION</scope>
    <scope>BIOPHYSICOCHEMICAL PROPERTIES</scope>
</reference>
<organism>
    <name type="scientific">Escherichia coli (strain K12)</name>
    <dbReference type="NCBI Taxonomy" id="83333"/>
    <lineage>
        <taxon>Bacteria</taxon>
        <taxon>Pseudomonadati</taxon>
        <taxon>Pseudomonadota</taxon>
        <taxon>Gammaproteobacteria</taxon>
        <taxon>Enterobacterales</taxon>
        <taxon>Enterobacteriaceae</taxon>
        <taxon>Escherichia</taxon>
    </lineage>
</organism>
<evidence type="ECO:0000250" key="1"/>
<evidence type="ECO:0000269" key="2">
    <source>
    </source>
</evidence>
<evidence type="ECO:0000269" key="3">
    <source>
    </source>
</evidence>
<evidence type="ECO:0000303" key="4">
    <source>
    </source>
</evidence>
<evidence type="ECO:0000305" key="5"/>
<comment type="function">
    <text evidence="2 3">Catalyzes the oxidation of L-galactonate to D-tagaturonate. Required for growth on L-galactonate as the sole carbon source. In vitro, can also use L-gulonate.</text>
</comment>
<comment type="catalytic activity">
    <reaction evidence="3">
        <text>L-galactonate + NAD(+) = keto-D-tagaturonate + NADH + H(+)</text>
        <dbReference type="Rhea" id="RHEA:30183"/>
        <dbReference type="ChEBI" id="CHEBI:15378"/>
        <dbReference type="ChEBI" id="CHEBI:17886"/>
        <dbReference type="ChEBI" id="CHEBI:53071"/>
        <dbReference type="ChEBI" id="CHEBI:57540"/>
        <dbReference type="ChEBI" id="CHEBI:57945"/>
        <dbReference type="EC" id="1.1.1.414"/>
    </reaction>
</comment>
<comment type="cofactor">
    <cofactor evidence="1">
        <name>Zn(2+)</name>
        <dbReference type="ChEBI" id="CHEBI:29105"/>
    </cofactor>
    <text evidence="1">Binds 2 Zn(2+) ions per subunit.</text>
</comment>
<comment type="activity regulation">
    <text evidence="3">Inhibited by EDTA.</text>
</comment>
<comment type="biophysicochemical properties">
    <kinetics>
        <KM evidence="3">19.5 mM for L-galactonate</KM>
        <Vmax evidence="3">0.8 umol/min/mg enzyme</Vmax>
        <text evidence="3">kcat is 0.51 sec(-1) with L-galactonate.</text>
    </kinetics>
    <phDependence>
        <text evidence="3">Optimum pH is 8.0.</text>
    </phDependence>
</comment>
<comment type="induction">
    <text evidence="2">Highly up-regulated during growth on L-galactonate.</text>
</comment>
<comment type="disruption phenotype">
    <text evidence="2">Cells lacking this gene fail to grow on L-galactonate as sole carbon source.</text>
</comment>
<comment type="similarity">
    <text evidence="5">Belongs to the zinc-containing alcohol dehydrogenase family.</text>
</comment>
<comment type="sequence caution" evidence="5">
    <conflict type="erroneous initiation">
        <sequence resource="EMBL-CDS" id="AAA97256"/>
    </conflict>
    <text>Extended N-terminus.</text>
</comment>
<protein>
    <recommendedName>
        <fullName evidence="4">L-galactonate-5-dehydrogenase</fullName>
        <ecNumber evidence="3">1.1.1.414</ecNumber>
    </recommendedName>
</protein>
<accession>P39400</accession>
<accession>Q2M5V8</accession>
<name>LGOD_ECOLI</name>
<gene>
    <name type="primary">lgoD</name>
    <name type="synonym">yjjN</name>
    <name type="ordered locus">b4358</name>
    <name type="ordered locus">JW5793</name>
</gene>
<feature type="chain" id="PRO_0000160895" description="L-galactonate-5-dehydrogenase">
    <location>
        <begin position="1"/>
        <end position="340"/>
    </location>
</feature>
<feature type="binding site" evidence="1">
    <location>
        <position position="40"/>
    </location>
    <ligand>
        <name>Zn(2+)</name>
        <dbReference type="ChEBI" id="CHEBI:29105"/>
        <label>1</label>
        <note>catalytic</note>
    </ligand>
</feature>
<feature type="binding site" evidence="1">
    <location>
        <position position="65"/>
    </location>
    <ligand>
        <name>Zn(2+)</name>
        <dbReference type="ChEBI" id="CHEBI:29105"/>
        <label>1</label>
        <note>catalytic</note>
    </ligand>
</feature>
<feature type="binding site" evidence="1">
    <location>
        <position position="92"/>
    </location>
    <ligand>
        <name>Zn(2+)</name>
        <dbReference type="ChEBI" id="CHEBI:29105"/>
        <label>2</label>
    </ligand>
</feature>
<feature type="binding site" evidence="1">
    <location>
        <position position="95"/>
    </location>
    <ligand>
        <name>Zn(2+)</name>
        <dbReference type="ChEBI" id="CHEBI:29105"/>
        <label>2</label>
    </ligand>
</feature>
<feature type="binding site" evidence="1">
    <location>
        <position position="98"/>
    </location>
    <ligand>
        <name>Zn(2+)</name>
        <dbReference type="ChEBI" id="CHEBI:29105"/>
        <label>2</label>
    </ligand>
</feature>
<feature type="binding site" evidence="1">
    <location>
        <position position="106"/>
    </location>
    <ligand>
        <name>Zn(2+)</name>
        <dbReference type="ChEBI" id="CHEBI:29105"/>
        <label>2</label>
    </ligand>
</feature>
<feature type="binding site" evidence="1">
    <location>
        <position position="146"/>
    </location>
    <ligand>
        <name>Zn(2+)</name>
        <dbReference type="ChEBI" id="CHEBI:29105"/>
        <label>1</label>
        <note>catalytic</note>
    </ligand>
</feature>
<proteinExistence type="evidence at protein level"/>
<keyword id="KW-0479">Metal-binding</keyword>
<keyword id="KW-0520">NAD</keyword>
<keyword id="KW-0560">Oxidoreductase</keyword>
<keyword id="KW-1185">Reference proteome</keyword>
<keyword id="KW-0862">Zinc</keyword>